<sequence length="88" mass="10241">MVKLRLKRCGKKQRAVYRIVAIDVRSRREGRDLWKVGFYDPINNKTYLDIPGILYFLEKGAQPTGTVYDILKKAGVFTEFSLNQMEVN</sequence>
<organism>
    <name type="scientific">Oenothera elata subsp. hookeri</name>
    <name type="common">Hooker's evening primrose</name>
    <name type="synonym">Oenothera hookeri</name>
    <dbReference type="NCBI Taxonomy" id="85636"/>
    <lineage>
        <taxon>Eukaryota</taxon>
        <taxon>Viridiplantae</taxon>
        <taxon>Streptophyta</taxon>
        <taxon>Embryophyta</taxon>
        <taxon>Tracheophyta</taxon>
        <taxon>Spermatophyta</taxon>
        <taxon>Magnoliopsida</taxon>
        <taxon>eudicotyledons</taxon>
        <taxon>Gunneridae</taxon>
        <taxon>Pentapetalae</taxon>
        <taxon>rosids</taxon>
        <taxon>malvids</taxon>
        <taxon>Myrtales</taxon>
        <taxon>Onagraceae</taxon>
        <taxon>Onagroideae</taxon>
        <taxon>Onagreae</taxon>
        <taxon>Oenothera</taxon>
    </lineage>
</organism>
<dbReference type="EMBL" id="AJ271079">
    <property type="protein sequence ID" value="CAB67125.1"/>
    <property type="molecule type" value="Genomic_DNA"/>
</dbReference>
<dbReference type="RefSeq" id="NP_084660.1">
    <property type="nucleotide sequence ID" value="NC_002693.2"/>
</dbReference>
<dbReference type="SMR" id="Q9MTQ0"/>
<dbReference type="GeneID" id="802811"/>
<dbReference type="GO" id="GO:0009507">
    <property type="term" value="C:chloroplast"/>
    <property type="evidence" value="ECO:0007669"/>
    <property type="project" value="UniProtKB-SubCell"/>
</dbReference>
<dbReference type="GO" id="GO:0005739">
    <property type="term" value="C:mitochondrion"/>
    <property type="evidence" value="ECO:0007669"/>
    <property type="project" value="GOC"/>
</dbReference>
<dbReference type="GO" id="GO:0015935">
    <property type="term" value="C:small ribosomal subunit"/>
    <property type="evidence" value="ECO:0007669"/>
    <property type="project" value="TreeGrafter"/>
</dbReference>
<dbReference type="GO" id="GO:0003735">
    <property type="term" value="F:structural constituent of ribosome"/>
    <property type="evidence" value="ECO:0007669"/>
    <property type="project" value="InterPro"/>
</dbReference>
<dbReference type="GO" id="GO:0032543">
    <property type="term" value="P:mitochondrial translation"/>
    <property type="evidence" value="ECO:0007669"/>
    <property type="project" value="TreeGrafter"/>
</dbReference>
<dbReference type="FunFam" id="3.30.1320.10:FF:000003">
    <property type="entry name" value="30S ribosomal protein S16, chloroplastic"/>
    <property type="match status" value="1"/>
</dbReference>
<dbReference type="Gene3D" id="3.30.1320.10">
    <property type="match status" value="1"/>
</dbReference>
<dbReference type="HAMAP" id="MF_00385">
    <property type="entry name" value="Ribosomal_bS16"/>
    <property type="match status" value="1"/>
</dbReference>
<dbReference type="InterPro" id="IPR000307">
    <property type="entry name" value="Ribosomal_bS16"/>
</dbReference>
<dbReference type="InterPro" id="IPR020592">
    <property type="entry name" value="Ribosomal_bS16_CS"/>
</dbReference>
<dbReference type="InterPro" id="IPR023803">
    <property type="entry name" value="Ribosomal_bS16_dom_sf"/>
</dbReference>
<dbReference type="NCBIfam" id="TIGR00002">
    <property type="entry name" value="S16"/>
    <property type="match status" value="1"/>
</dbReference>
<dbReference type="PANTHER" id="PTHR12919">
    <property type="entry name" value="30S RIBOSOMAL PROTEIN S16"/>
    <property type="match status" value="1"/>
</dbReference>
<dbReference type="PANTHER" id="PTHR12919:SF20">
    <property type="entry name" value="SMALL RIBOSOMAL SUBUNIT PROTEIN BS16M"/>
    <property type="match status" value="1"/>
</dbReference>
<dbReference type="Pfam" id="PF00886">
    <property type="entry name" value="Ribosomal_S16"/>
    <property type="match status" value="1"/>
</dbReference>
<dbReference type="SUPFAM" id="SSF54565">
    <property type="entry name" value="Ribosomal protein S16"/>
    <property type="match status" value="1"/>
</dbReference>
<dbReference type="PROSITE" id="PS00732">
    <property type="entry name" value="RIBOSOMAL_S16"/>
    <property type="match status" value="1"/>
</dbReference>
<gene>
    <name evidence="1" type="primary">rps16</name>
</gene>
<feature type="chain" id="PRO_0000167310" description="Small ribosomal subunit protein bS16c">
    <location>
        <begin position="1"/>
        <end position="88"/>
    </location>
</feature>
<name>RR16_OENEH</name>
<reference key="1">
    <citation type="journal article" date="2000" name="Mol. Gen. Genet.">
        <title>Complete nucleotide sequence of the Oenothera elata plastid chromosome, representing plastome I of the five distinguishable Euoenothera plastomes.</title>
        <authorList>
            <person name="Hupfer H."/>
            <person name="Swiatek M."/>
            <person name="Hornung S."/>
            <person name="Herrmann R.G."/>
            <person name="Maier R.M."/>
            <person name="Chiu W.-L."/>
            <person name="Sears B."/>
        </authorList>
    </citation>
    <scope>NUCLEOTIDE SEQUENCE [LARGE SCALE GENOMIC DNA]</scope>
    <source>
        <strain>cv. Johansen</strain>
    </source>
</reference>
<protein>
    <recommendedName>
        <fullName evidence="1">Small ribosomal subunit protein bS16c</fullName>
    </recommendedName>
    <alternativeName>
        <fullName evidence="2">30S ribosomal protein S16, chloroplastic</fullName>
    </alternativeName>
</protein>
<accession>Q9MTQ0</accession>
<evidence type="ECO:0000255" key="1">
    <source>
        <dbReference type="HAMAP-Rule" id="MF_00385"/>
    </source>
</evidence>
<evidence type="ECO:0000305" key="2"/>
<comment type="subcellular location">
    <subcellularLocation>
        <location>Plastid</location>
        <location>Chloroplast</location>
    </subcellularLocation>
</comment>
<comment type="similarity">
    <text evidence="1">Belongs to the bacterial ribosomal protein bS16 family.</text>
</comment>
<keyword id="KW-0150">Chloroplast</keyword>
<keyword id="KW-0934">Plastid</keyword>
<keyword id="KW-0687">Ribonucleoprotein</keyword>
<keyword id="KW-0689">Ribosomal protein</keyword>
<proteinExistence type="inferred from homology"/>
<geneLocation type="chloroplast"/>